<feature type="peptide" id="PRO_0000449246" description="Morintide mO3" evidence="3">
    <location>
        <begin position="1"/>
        <end position="31"/>
    </location>
</feature>
<feature type="domain" description="Chitin-binding type-1" evidence="2">
    <location>
        <begin position="1"/>
        <end position="30"/>
    </location>
</feature>
<feature type="disulfide bond" evidence="2">
    <location>
        <begin position="4"/>
        <end position="18"/>
    </location>
</feature>
<feature type="disulfide bond" evidence="2">
    <location>
        <begin position="24"/>
        <end position="28"/>
    </location>
</feature>
<feature type="unsure residue" description="L or I" evidence="3">
    <location>
        <position position="3"/>
    </location>
</feature>
<feature type="unsure residue" description="Q or K" evidence="3">
    <location>
        <position position="7"/>
    </location>
</feature>
<feature type="unsure residue" description="Q or K" evidence="3">
    <location>
        <position position="25"/>
    </location>
</feature>
<feature type="non-terminal residue" evidence="4">
    <location>
        <position position="1"/>
    </location>
</feature>
<feature type="non-terminal residue" evidence="4">
    <location>
        <position position="31"/>
    </location>
</feature>
<reference key="1">
    <citation type="journal article" date="2020" name="J. Proteomics">
        <title>Mo-HLPs: New flocculating agents identified from Moringa oleifera seeds belong to the hevein-like peptide family.</title>
        <authorList>
            <person name="Sousa A.M.P."/>
            <person name="Salles H.O."/>
            <person name="Oliveira H.D."/>
            <person name="Souza B.B.P."/>
            <person name="Cardozo Filho J.L."/>
            <person name="Sifuentes D.N."/>
            <person name="Prates M.V."/>
            <person name="Bloch Junior C."/>
            <person name="Bemquerer M.P."/>
            <person name="Egito A.S.D."/>
        </authorList>
    </citation>
    <scope>PROTEIN SEQUENCE</scope>
    <scope>IDENTIFICATION BY MASS SPECTROMETRY</scope>
    <scope>TISSUE SPECIFICITY</scope>
    <scope>BIOTECHNOLOGY</scope>
    <source>
        <tissue evidence="4">Seed</tissue>
    </source>
</reference>
<proteinExistence type="evidence at protein level"/>
<keyword id="KW-0929">Antimicrobial</keyword>
<keyword id="KW-0147">Chitin-binding</keyword>
<keyword id="KW-0903">Direct protein sequencing</keyword>
<keyword id="KW-1015">Disulfide bond</keyword>
<keyword id="KW-0295">Fungicide</keyword>
<evidence type="ECO:0000250" key="1">
    <source>
        <dbReference type="UniProtKB" id="A0A1S6EK91"/>
    </source>
</evidence>
<evidence type="ECO:0000255" key="2">
    <source>
        <dbReference type="PROSITE-ProRule" id="PRU00261"/>
    </source>
</evidence>
<evidence type="ECO:0000269" key="3">
    <source>
    </source>
</evidence>
<evidence type="ECO:0000303" key="4">
    <source>
    </source>
</evidence>
<evidence type="ECO:0000305" key="5"/>
<comment type="function">
    <text evidence="1">Chitin-binding protein which functions in defense against chitin-containing fungal pathogens.</text>
</comment>
<comment type="tissue specificity">
    <text evidence="3">Seeds (at protein level).</text>
</comment>
<comment type="mass spectrometry"/>
<comment type="biotechnology">
    <text evidence="3">Has potential use as a flocculating agent in water treatment processes.</text>
</comment>
<accession>C0HLN3</accession>
<dbReference type="SMR" id="C0HLN3"/>
<dbReference type="GO" id="GO:0008061">
    <property type="term" value="F:chitin binding"/>
    <property type="evidence" value="ECO:0007669"/>
    <property type="project" value="UniProtKB-KW"/>
</dbReference>
<dbReference type="GO" id="GO:0050832">
    <property type="term" value="P:defense response to fungus"/>
    <property type="evidence" value="ECO:0007669"/>
    <property type="project" value="UniProtKB-KW"/>
</dbReference>
<dbReference type="GO" id="GO:0031640">
    <property type="term" value="P:killing of cells of another organism"/>
    <property type="evidence" value="ECO:0007669"/>
    <property type="project" value="UniProtKB-KW"/>
</dbReference>
<dbReference type="Gene3D" id="3.30.60.10">
    <property type="entry name" value="Endochitinase-like"/>
    <property type="match status" value="1"/>
</dbReference>
<dbReference type="InterPro" id="IPR001002">
    <property type="entry name" value="Chitin-bd_1"/>
</dbReference>
<dbReference type="InterPro" id="IPR036861">
    <property type="entry name" value="Endochitinase-like_sf"/>
</dbReference>
<dbReference type="Pfam" id="PF00187">
    <property type="entry name" value="Chitin_bind_1"/>
    <property type="match status" value="1"/>
</dbReference>
<dbReference type="SMART" id="SM00270">
    <property type="entry name" value="ChtBD1"/>
    <property type="match status" value="1"/>
</dbReference>
<dbReference type="SUPFAM" id="SSF57016">
    <property type="entry name" value="Plant lectins/antimicrobial peptides"/>
    <property type="match status" value="1"/>
</dbReference>
<dbReference type="PROSITE" id="PS50941">
    <property type="entry name" value="CHIT_BIND_I_2"/>
    <property type="match status" value="1"/>
</dbReference>
<protein>
    <recommendedName>
        <fullName evidence="5">Morintide mO3</fullName>
    </recommendedName>
    <alternativeName>
        <fullName evidence="4">Morintide hevein-like peptide 3</fullName>
        <shortName evidence="4">Mo-HLP3</shortName>
    </alternativeName>
</protein>
<name>MO3_MOROL</name>
<organism evidence="4">
    <name type="scientific">Moringa oleifera</name>
    <name type="common">Horseradish tree</name>
    <name type="synonym">Moringa pterygosperma</name>
    <dbReference type="NCBI Taxonomy" id="3735"/>
    <lineage>
        <taxon>Eukaryota</taxon>
        <taxon>Viridiplantae</taxon>
        <taxon>Streptophyta</taxon>
        <taxon>Embryophyta</taxon>
        <taxon>Tracheophyta</taxon>
        <taxon>Spermatophyta</taxon>
        <taxon>Magnoliopsida</taxon>
        <taxon>eudicotyledons</taxon>
        <taxon>Gunneridae</taxon>
        <taxon>Pentapetalae</taxon>
        <taxon>rosids</taxon>
        <taxon>malvids</taxon>
        <taxon>Brassicales</taxon>
        <taxon>Moringaceae</taxon>
        <taxon>Moringa</taxon>
    </lineage>
</organism>
<sequence>NRLCCSQYGFCGTTSEYCSRANGCQSNCWGR</sequence>